<accession>Q1QZ29</accession>
<comment type="function">
    <text evidence="1">Hydrolyzes diadenosine 5',5'''-P1,P4-tetraphosphate to yield ADP.</text>
</comment>
<comment type="catalytic activity">
    <reaction evidence="1">
        <text>P(1),P(4)-bis(5'-adenosyl) tetraphosphate + H2O = 2 ADP + 2 H(+)</text>
        <dbReference type="Rhea" id="RHEA:24252"/>
        <dbReference type="ChEBI" id="CHEBI:15377"/>
        <dbReference type="ChEBI" id="CHEBI:15378"/>
        <dbReference type="ChEBI" id="CHEBI:58141"/>
        <dbReference type="ChEBI" id="CHEBI:456216"/>
        <dbReference type="EC" id="3.6.1.41"/>
    </reaction>
</comment>
<comment type="similarity">
    <text evidence="1">Belongs to the Ap4A hydrolase family.</text>
</comment>
<feature type="chain" id="PRO_1000012053" description="Bis(5'-nucleosyl)-tetraphosphatase, symmetrical">
    <location>
        <begin position="1"/>
        <end position="272"/>
    </location>
</feature>
<keyword id="KW-0378">Hydrolase</keyword>
<keyword id="KW-1185">Reference proteome</keyword>
<name>APAH_CHRSD</name>
<organism>
    <name type="scientific">Chromohalobacter salexigens (strain ATCC BAA-138 / DSM 3043 / CIP 106854 / NCIMB 13768 / 1H11)</name>
    <dbReference type="NCBI Taxonomy" id="290398"/>
    <lineage>
        <taxon>Bacteria</taxon>
        <taxon>Pseudomonadati</taxon>
        <taxon>Pseudomonadota</taxon>
        <taxon>Gammaproteobacteria</taxon>
        <taxon>Oceanospirillales</taxon>
        <taxon>Halomonadaceae</taxon>
        <taxon>Chromohalobacter</taxon>
    </lineage>
</organism>
<evidence type="ECO:0000255" key="1">
    <source>
        <dbReference type="HAMAP-Rule" id="MF_00199"/>
    </source>
</evidence>
<proteinExistence type="inferred from homology"/>
<sequence>MSTYAIGDLQGCHAEFEALLERIAFEPRRDRLWLVGDLVNRGPGSLACLRAVKALGDSARVVLGNHDLHLLAAAWAGAPLKRSDTLAPILEADDRDELLDWLRRQPLLVRDDELDAVMTHAGLPPHWSVTQAAEHAAEVERALRGEAVGDFLAAMYGNSPARWTDELEGIDRLRVIVNTFTRMRFIAADGTLDFAAKEGLDSAPEGFAPWFTYARDDDPRIVFGHWAALQGATPGARVRALALDTGCVWGGALTALDLVSGEYHVEPAHASR</sequence>
<reference key="1">
    <citation type="journal article" date="2011" name="Stand. Genomic Sci.">
        <title>Complete genome sequence of the halophilic and highly halotolerant Chromohalobacter salexigens type strain (1H11(T)).</title>
        <authorList>
            <person name="Copeland A."/>
            <person name="O'Connor K."/>
            <person name="Lucas S."/>
            <person name="Lapidus A."/>
            <person name="Berry K.W."/>
            <person name="Detter J.C."/>
            <person name="Del Rio T.G."/>
            <person name="Hammon N."/>
            <person name="Dalin E."/>
            <person name="Tice H."/>
            <person name="Pitluck S."/>
            <person name="Bruce D."/>
            <person name="Goodwin L."/>
            <person name="Han C."/>
            <person name="Tapia R."/>
            <person name="Saunders E."/>
            <person name="Schmutz J."/>
            <person name="Brettin T."/>
            <person name="Larimer F."/>
            <person name="Land M."/>
            <person name="Hauser L."/>
            <person name="Vargas C."/>
            <person name="Nieto J.J."/>
            <person name="Kyrpides N.C."/>
            <person name="Ivanova N."/>
            <person name="Goker M."/>
            <person name="Klenk H.P."/>
            <person name="Csonka L.N."/>
            <person name="Woyke T."/>
        </authorList>
    </citation>
    <scope>NUCLEOTIDE SEQUENCE [LARGE SCALE GENOMIC DNA]</scope>
    <source>
        <strain>ATCC BAA-138 / DSM 3043 / CIP 106854 / NCIMB 13768 / 1H11</strain>
    </source>
</reference>
<gene>
    <name evidence="1" type="primary">apaH</name>
    <name type="ordered locus">Csal_0922</name>
</gene>
<dbReference type="EC" id="3.6.1.41" evidence="1"/>
<dbReference type="EMBL" id="CP000285">
    <property type="protein sequence ID" value="ABE58279.1"/>
    <property type="molecule type" value="Genomic_DNA"/>
</dbReference>
<dbReference type="RefSeq" id="WP_011506225.1">
    <property type="nucleotide sequence ID" value="NC_007963.1"/>
</dbReference>
<dbReference type="SMR" id="Q1QZ29"/>
<dbReference type="STRING" id="290398.Csal_0922"/>
<dbReference type="GeneID" id="95333678"/>
<dbReference type="KEGG" id="csa:Csal_0922"/>
<dbReference type="eggNOG" id="COG0639">
    <property type="taxonomic scope" value="Bacteria"/>
</dbReference>
<dbReference type="HOGENOM" id="CLU_056184_2_0_6"/>
<dbReference type="OrthoDB" id="9807890at2"/>
<dbReference type="Proteomes" id="UP000000239">
    <property type="component" value="Chromosome"/>
</dbReference>
<dbReference type="GO" id="GO:0008803">
    <property type="term" value="F:bis(5'-nucleosyl)-tetraphosphatase (symmetrical) activity"/>
    <property type="evidence" value="ECO:0007669"/>
    <property type="project" value="UniProtKB-UniRule"/>
</dbReference>
<dbReference type="CDD" id="cd07422">
    <property type="entry name" value="MPP_ApaH"/>
    <property type="match status" value="1"/>
</dbReference>
<dbReference type="Gene3D" id="3.60.21.10">
    <property type="match status" value="1"/>
</dbReference>
<dbReference type="HAMAP" id="MF_00199">
    <property type="entry name" value="ApaH"/>
    <property type="match status" value="1"/>
</dbReference>
<dbReference type="InterPro" id="IPR004617">
    <property type="entry name" value="ApaH"/>
</dbReference>
<dbReference type="InterPro" id="IPR004843">
    <property type="entry name" value="Calcineurin-like_PHP_ApaH"/>
</dbReference>
<dbReference type="InterPro" id="IPR029052">
    <property type="entry name" value="Metallo-depent_PP-like"/>
</dbReference>
<dbReference type="NCBIfam" id="TIGR00668">
    <property type="entry name" value="apaH"/>
    <property type="match status" value="1"/>
</dbReference>
<dbReference type="NCBIfam" id="NF001204">
    <property type="entry name" value="PRK00166.1"/>
    <property type="match status" value="1"/>
</dbReference>
<dbReference type="PANTHER" id="PTHR40942">
    <property type="match status" value="1"/>
</dbReference>
<dbReference type="PANTHER" id="PTHR40942:SF4">
    <property type="entry name" value="CYTOCHROME C5"/>
    <property type="match status" value="1"/>
</dbReference>
<dbReference type="Pfam" id="PF00149">
    <property type="entry name" value="Metallophos"/>
    <property type="match status" value="1"/>
</dbReference>
<dbReference type="PIRSF" id="PIRSF000903">
    <property type="entry name" value="B5n-ttraPtase_sm"/>
    <property type="match status" value="1"/>
</dbReference>
<dbReference type="SUPFAM" id="SSF56300">
    <property type="entry name" value="Metallo-dependent phosphatases"/>
    <property type="match status" value="1"/>
</dbReference>
<protein>
    <recommendedName>
        <fullName evidence="1">Bis(5'-nucleosyl)-tetraphosphatase, symmetrical</fullName>
        <ecNumber evidence="1">3.6.1.41</ecNumber>
    </recommendedName>
    <alternativeName>
        <fullName evidence="1">Ap4A hydrolase</fullName>
    </alternativeName>
    <alternativeName>
        <fullName evidence="1">Diadenosine 5',5'''-P1,P4-tetraphosphate pyrophosphohydrolase</fullName>
    </alternativeName>
    <alternativeName>
        <fullName evidence="1">Diadenosine tetraphosphatase</fullName>
    </alternativeName>
</protein>